<dbReference type="EC" id="1.1.1.290" evidence="1"/>
<dbReference type="EMBL" id="BX936398">
    <property type="protein sequence ID" value="CAH21858.1"/>
    <property type="status" value="ALT_INIT"/>
    <property type="molecule type" value="Genomic_DNA"/>
</dbReference>
<dbReference type="RefSeq" id="WP_002209725.1">
    <property type="nucleotide sequence ID" value="NZ_CP009712.1"/>
</dbReference>
<dbReference type="SMR" id="Q668W7"/>
<dbReference type="GeneID" id="57975926"/>
<dbReference type="KEGG" id="ypo:BZ17_4019"/>
<dbReference type="KEGG" id="yps:YPTB2620"/>
<dbReference type="PATRIC" id="fig|273123.14.peg.4219"/>
<dbReference type="UniPathway" id="UPA00244">
    <property type="reaction ID" value="UER00310"/>
</dbReference>
<dbReference type="Proteomes" id="UP000001011">
    <property type="component" value="Chromosome"/>
</dbReference>
<dbReference type="GO" id="GO:0005829">
    <property type="term" value="C:cytosol"/>
    <property type="evidence" value="ECO:0007669"/>
    <property type="project" value="TreeGrafter"/>
</dbReference>
<dbReference type="GO" id="GO:0033711">
    <property type="term" value="F:4-phosphoerythronate dehydrogenase activity"/>
    <property type="evidence" value="ECO:0007669"/>
    <property type="project" value="UniProtKB-EC"/>
</dbReference>
<dbReference type="GO" id="GO:0051287">
    <property type="term" value="F:NAD binding"/>
    <property type="evidence" value="ECO:0007669"/>
    <property type="project" value="InterPro"/>
</dbReference>
<dbReference type="GO" id="GO:0046983">
    <property type="term" value="F:protein dimerization activity"/>
    <property type="evidence" value="ECO:0007669"/>
    <property type="project" value="InterPro"/>
</dbReference>
<dbReference type="GO" id="GO:0036001">
    <property type="term" value="P:'de novo' pyridoxal 5'-phosphate biosynthetic process"/>
    <property type="evidence" value="ECO:0007669"/>
    <property type="project" value="TreeGrafter"/>
</dbReference>
<dbReference type="GO" id="GO:0008615">
    <property type="term" value="P:pyridoxine biosynthetic process"/>
    <property type="evidence" value="ECO:0007669"/>
    <property type="project" value="UniProtKB-UniRule"/>
</dbReference>
<dbReference type="CDD" id="cd12158">
    <property type="entry name" value="ErythrP_dh"/>
    <property type="match status" value="1"/>
</dbReference>
<dbReference type="FunFam" id="3.30.1370.170:FF:000001">
    <property type="entry name" value="Erythronate-4-phosphate dehydrogenase"/>
    <property type="match status" value="1"/>
</dbReference>
<dbReference type="FunFam" id="3.40.50.720:FF:000093">
    <property type="entry name" value="Erythronate-4-phosphate dehydrogenase"/>
    <property type="match status" value="1"/>
</dbReference>
<dbReference type="Gene3D" id="3.30.1370.170">
    <property type="match status" value="1"/>
</dbReference>
<dbReference type="Gene3D" id="3.40.50.720">
    <property type="entry name" value="NAD(P)-binding Rossmann-like Domain"/>
    <property type="match status" value="2"/>
</dbReference>
<dbReference type="HAMAP" id="MF_01825">
    <property type="entry name" value="PdxB"/>
    <property type="match status" value="1"/>
</dbReference>
<dbReference type="InterPro" id="IPR006139">
    <property type="entry name" value="D-isomer_2_OHA_DH_cat_dom"/>
</dbReference>
<dbReference type="InterPro" id="IPR029753">
    <property type="entry name" value="D-isomer_DH_CS"/>
</dbReference>
<dbReference type="InterPro" id="IPR029752">
    <property type="entry name" value="D-isomer_DH_CS1"/>
</dbReference>
<dbReference type="InterPro" id="IPR006140">
    <property type="entry name" value="D-isomer_DH_NAD-bd"/>
</dbReference>
<dbReference type="InterPro" id="IPR020921">
    <property type="entry name" value="Erythronate-4-P_DHase"/>
</dbReference>
<dbReference type="InterPro" id="IPR024531">
    <property type="entry name" value="Erythronate-4-P_DHase_dimer"/>
</dbReference>
<dbReference type="InterPro" id="IPR036291">
    <property type="entry name" value="NAD(P)-bd_dom_sf"/>
</dbReference>
<dbReference type="InterPro" id="IPR038251">
    <property type="entry name" value="PdxB_dimer_sf"/>
</dbReference>
<dbReference type="NCBIfam" id="NF001309">
    <property type="entry name" value="PRK00257.1"/>
    <property type="match status" value="1"/>
</dbReference>
<dbReference type="PANTHER" id="PTHR42938">
    <property type="entry name" value="FORMATE DEHYDROGENASE 1"/>
    <property type="match status" value="1"/>
</dbReference>
<dbReference type="PANTHER" id="PTHR42938:SF9">
    <property type="entry name" value="FORMATE DEHYDROGENASE 1"/>
    <property type="match status" value="1"/>
</dbReference>
<dbReference type="Pfam" id="PF00389">
    <property type="entry name" value="2-Hacid_dh"/>
    <property type="match status" value="1"/>
</dbReference>
<dbReference type="Pfam" id="PF02826">
    <property type="entry name" value="2-Hacid_dh_C"/>
    <property type="match status" value="1"/>
</dbReference>
<dbReference type="Pfam" id="PF11890">
    <property type="entry name" value="DUF3410"/>
    <property type="match status" value="1"/>
</dbReference>
<dbReference type="SUPFAM" id="SSF52283">
    <property type="entry name" value="Formate/glycerate dehydrogenase catalytic domain-like"/>
    <property type="match status" value="1"/>
</dbReference>
<dbReference type="SUPFAM" id="SSF51735">
    <property type="entry name" value="NAD(P)-binding Rossmann-fold domains"/>
    <property type="match status" value="1"/>
</dbReference>
<dbReference type="PROSITE" id="PS00065">
    <property type="entry name" value="D_2_HYDROXYACID_DH_1"/>
    <property type="match status" value="1"/>
</dbReference>
<dbReference type="PROSITE" id="PS00671">
    <property type="entry name" value="D_2_HYDROXYACID_DH_3"/>
    <property type="match status" value="1"/>
</dbReference>
<sequence length="375" mass="41167">MKILVDENMPYAEELFRRLGDVQAVPGRPIPRDALVDADALMVRSVTKVNEALLHGTSIGFVGTATAGTDHVDDTWLRQQGIGFSAAPGCNAIAVVEYVFSALMMMAERDGFQLRDKTVGIIGVGNVGSRLNARLQALGVRTLLCDPPRADRGDNEAFWPLEKLVREADVLTFHTPLNKTGAYQSLHMADDELLAALPDGRILINACRGAVVDNAALLRALEKGKKLSVVLDVWEPEPDLSLPLLARVDIGTPHIAGYTLEGKARGTTQVFEAFSQHLGQPQSVELASLLPVPEFSHLRLNGELDEGKLKRLMHLVYDVRRDDAPLRHVAGLPGEFDRLRKHYQERREWSSLCVQCDDATSAGLLQQLGFTTQLL</sequence>
<keyword id="KW-0963">Cytoplasm</keyword>
<keyword id="KW-0520">NAD</keyword>
<keyword id="KW-0560">Oxidoreductase</keyword>
<keyword id="KW-0664">Pyridoxine biosynthesis</keyword>
<reference key="1">
    <citation type="journal article" date="2004" name="Proc. Natl. Acad. Sci. U.S.A.">
        <title>Insights into the evolution of Yersinia pestis through whole-genome comparison with Yersinia pseudotuberculosis.</title>
        <authorList>
            <person name="Chain P.S.G."/>
            <person name="Carniel E."/>
            <person name="Larimer F.W."/>
            <person name="Lamerdin J."/>
            <person name="Stoutland P.O."/>
            <person name="Regala W.M."/>
            <person name="Georgescu A.M."/>
            <person name="Vergez L.M."/>
            <person name="Land M.L."/>
            <person name="Motin V.L."/>
            <person name="Brubaker R.R."/>
            <person name="Fowler J."/>
            <person name="Hinnebusch J."/>
            <person name="Marceau M."/>
            <person name="Medigue C."/>
            <person name="Simonet M."/>
            <person name="Chenal-Francisque V."/>
            <person name="Souza B."/>
            <person name="Dacheux D."/>
            <person name="Elliott J.M."/>
            <person name="Derbise A."/>
            <person name="Hauser L.J."/>
            <person name="Garcia E."/>
        </authorList>
    </citation>
    <scope>NUCLEOTIDE SEQUENCE [LARGE SCALE GENOMIC DNA]</scope>
    <source>
        <strain>IP32953</strain>
    </source>
</reference>
<comment type="function">
    <text evidence="1">Catalyzes the oxidation of erythronate-4-phosphate to 3-hydroxy-2-oxo-4-phosphonooxybutanoate.</text>
</comment>
<comment type="catalytic activity">
    <reaction evidence="1">
        <text>4-phospho-D-erythronate + NAD(+) = (R)-3-hydroxy-2-oxo-4-phosphooxybutanoate + NADH + H(+)</text>
        <dbReference type="Rhea" id="RHEA:18829"/>
        <dbReference type="ChEBI" id="CHEBI:15378"/>
        <dbReference type="ChEBI" id="CHEBI:57540"/>
        <dbReference type="ChEBI" id="CHEBI:57945"/>
        <dbReference type="ChEBI" id="CHEBI:58538"/>
        <dbReference type="ChEBI" id="CHEBI:58766"/>
        <dbReference type="EC" id="1.1.1.290"/>
    </reaction>
</comment>
<comment type="pathway">
    <text evidence="1">Cofactor biosynthesis; pyridoxine 5'-phosphate biosynthesis; pyridoxine 5'-phosphate from D-erythrose 4-phosphate: step 2/5.</text>
</comment>
<comment type="subunit">
    <text evidence="1">Homodimer.</text>
</comment>
<comment type="subcellular location">
    <subcellularLocation>
        <location evidence="1">Cytoplasm</location>
    </subcellularLocation>
</comment>
<comment type="similarity">
    <text evidence="1">Belongs to the D-isomer specific 2-hydroxyacid dehydrogenase family. PdxB subfamily.</text>
</comment>
<comment type="sequence caution" evidence="2">
    <conflict type="erroneous initiation">
        <sequence resource="EMBL-CDS" id="CAH21858"/>
    </conflict>
</comment>
<protein>
    <recommendedName>
        <fullName evidence="1">Erythronate-4-phosphate dehydrogenase</fullName>
        <ecNumber evidence="1">1.1.1.290</ecNumber>
    </recommendedName>
</protein>
<name>PDXB_YERPS</name>
<feature type="chain" id="PRO_0000075997" description="Erythronate-4-phosphate dehydrogenase">
    <location>
        <begin position="1"/>
        <end position="375"/>
    </location>
</feature>
<feature type="active site" evidence="1">
    <location>
        <position position="208"/>
    </location>
</feature>
<feature type="active site" evidence="1">
    <location>
        <position position="237"/>
    </location>
</feature>
<feature type="active site" description="Proton donor" evidence="1">
    <location>
        <position position="254"/>
    </location>
</feature>
<feature type="binding site" evidence="1">
    <location>
        <position position="45"/>
    </location>
    <ligand>
        <name>substrate</name>
    </ligand>
</feature>
<feature type="binding site" evidence="1">
    <location>
        <position position="66"/>
    </location>
    <ligand>
        <name>substrate</name>
    </ligand>
</feature>
<feature type="binding site" evidence="1">
    <location>
        <position position="146"/>
    </location>
    <ligand>
        <name>NAD(+)</name>
        <dbReference type="ChEBI" id="CHEBI:57540"/>
    </ligand>
</feature>
<feature type="binding site" evidence="1">
    <location>
        <position position="175"/>
    </location>
    <ligand>
        <name>NAD(+)</name>
        <dbReference type="ChEBI" id="CHEBI:57540"/>
    </ligand>
</feature>
<feature type="binding site" evidence="1">
    <location>
        <position position="232"/>
    </location>
    <ligand>
        <name>NAD(+)</name>
        <dbReference type="ChEBI" id="CHEBI:57540"/>
    </ligand>
</feature>
<feature type="binding site" evidence="1">
    <location>
        <position position="257"/>
    </location>
    <ligand>
        <name>NAD(+)</name>
        <dbReference type="ChEBI" id="CHEBI:57540"/>
    </ligand>
</feature>
<feature type="binding site" evidence="1">
    <location>
        <position position="258"/>
    </location>
    <ligand>
        <name>substrate</name>
    </ligand>
</feature>
<organism>
    <name type="scientific">Yersinia pseudotuberculosis serotype I (strain IP32953)</name>
    <dbReference type="NCBI Taxonomy" id="273123"/>
    <lineage>
        <taxon>Bacteria</taxon>
        <taxon>Pseudomonadati</taxon>
        <taxon>Pseudomonadota</taxon>
        <taxon>Gammaproteobacteria</taxon>
        <taxon>Enterobacterales</taxon>
        <taxon>Yersiniaceae</taxon>
        <taxon>Yersinia</taxon>
    </lineage>
</organism>
<gene>
    <name evidence="1" type="primary">pdxB</name>
    <name type="ordered locus">YPTB2620</name>
</gene>
<proteinExistence type="inferred from homology"/>
<accession>Q668W7</accession>
<evidence type="ECO:0000255" key="1">
    <source>
        <dbReference type="HAMAP-Rule" id="MF_01825"/>
    </source>
</evidence>
<evidence type="ECO:0000305" key="2"/>